<gene>
    <name evidence="1" type="primary">trpF</name>
    <name type="ordered locus">SH1538</name>
</gene>
<evidence type="ECO:0000255" key="1">
    <source>
        <dbReference type="HAMAP-Rule" id="MF_00135"/>
    </source>
</evidence>
<name>TRPF_STAHJ</name>
<feature type="chain" id="PRO_0000154384" description="N-(5'-phosphoribosyl)anthranilate isomerase">
    <location>
        <begin position="1"/>
        <end position="208"/>
    </location>
</feature>
<sequence>MILKFCGIKTKVEALSIRPLNINMVGFIHYPKSKRHLDIEQINKLSRLLPDEIDRVVVLVNPTLQLIKKIINATNINAIQLHGDETIDFIKQLRLNFKNIKIIKALPATQNIINDINQFKEHIDLFIIDTPSEQYGGTGQSFDWTLLKGLDQSIPFLIAGGIDVDKIKQIETLKLNHLGYDISSSIETDGMKDKNKMLTVIQQVKGEL</sequence>
<protein>
    <recommendedName>
        <fullName evidence="1">N-(5'-phosphoribosyl)anthranilate isomerase</fullName>
        <shortName evidence="1">PRAI</shortName>
        <ecNumber evidence="1">5.3.1.24</ecNumber>
    </recommendedName>
</protein>
<organism>
    <name type="scientific">Staphylococcus haemolyticus (strain JCSC1435)</name>
    <dbReference type="NCBI Taxonomy" id="279808"/>
    <lineage>
        <taxon>Bacteria</taxon>
        <taxon>Bacillati</taxon>
        <taxon>Bacillota</taxon>
        <taxon>Bacilli</taxon>
        <taxon>Bacillales</taxon>
        <taxon>Staphylococcaceae</taxon>
        <taxon>Staphylococcus</taxon>
    </lineage>
</organism>
<proteinExistence type="inferred from homology"/>
<reference key="1">
    <citation type="journal article" date="2005" name="J. Bacteriol.">
        <title>Whole-genome sequencing of Staphylococcus haemolyticus uncovers the extreme plasticity of its genome and the evolution of human-colonizing staphylococcal species.</title>
        <authorList>
            <person name="Takeuchi F."/>
            <person name="Watanabe S."/>
            <person name="Baba T."/>
            <person name="Yuzawa H."/>
            <person name="Ito T."/>
            <person name="Morimoto Y."/>
            <person name="Kuroda M."/>
            <person name="Cui L."/>
            <person name="Takahashi M."/>
            <person name="Ankai A."/>
            <person name="Baba S."/>
            <person name="Fukui S."/>
            <person name="Lee J.C."/>
            <person name="Hiramatsu K."/>
        </authorList>
    </citation>
    <scope>NUCLEOTIDE SEQUENCE [LARGE SCALE GENOMIC DNA]</scope>
    <source>
        <strain>JCSC1435</strain>
    </source>
</reference>
<comment type="catalytic activity">
    <reaction evidence="1">
        <text>N-(5-phospho-beta-D-ribosyl)anthranilate = 1-(2-carboxyphenylamino)-1-deoxy-D-ribulose 5-phosphate</text>
        <dbReference type="Rhea" id="RHEA:21540"/>
        <dbReference type="ChEBI" id="CHEBI:18277"/>
        <dbReference type="ChEBI" id="CHEBI:58613"/>
        <dbReference type="EC" id="5.3.1.24"/>
    </reaction>
</comment>
<comment type="pathway">
    <text evidence="1">Amino-acid biosynthesis; L-tryptophan biosynthesis; L-tryptophan from chorismate: step 3/5.</text>
</comment>
<comment type="similarity">
    <text evidence="1">Belongs to the TrpF family.</text>
</comment>
<keyword id="KW-0028">Amino-acid biosynthesis</keyword>
<keyword id="KW-0057">Aromatic amino acid biosynthesis</keyword>
<keyword id="KW-0413">Isomerase</keyword>
<keyword id="KW-0822">Tryptophan biosynthesis</keyword>
<dbReference type="EC" id="5.3.1.24" evidence="1"/>
<dbReference type="EMBL" id="AP006716">
    <property type="protein sequence ID" value="BAE04847.1"/>
    <property type="molecule type" value="Genomic_DNA"/>
</dbReference>
<dbReference type="RefSeq" id="WP_011275829.1">
    <property type="nucleotide sequence ID" value="NC_007168.1"/>
</dbReference>
<dbReference type="SMR" id="Q4L678"/>
<dbReference type="KEGG" id="sha:SH1538"/>
<dbReference type="eggNOG" id="COG0135">
    <property type="taxonomic scope" value="Bacteria"/>
</dbReference>
<dbReference type="HOGENOM" id="CLU_076364_1_2_9"/>
<dbReference type="OrthoDB" id="9786954at2"/>
<dbReference type="UniPathway" id="UPA00035">
    <property type="reaction ID" value="UER00042"/>
</dbReference>
<dbReference type="Proteomes" id="UP000000543">
    <property type="component" value="Chromosome"/>
</dbReference>
<dbReference type="GO" id="GO:0004640">
    <property type="term" value="F:phosphoribosylanthranilate isomerase activity"/>
    <property type="evidence" value="ECO:0007669"/>
    <property type="project" value="UniProtKB-UniRule"/>
</dbReference>
<dbReference type="GO" id="GO:0000162">
    <property type="term" value="P:L-tryptophan biosynthetic process"/>
    <property type="evidence" value="ECO:0007669"/>
    <property type="project" value="UniProtKB-UniRule"/>
</dbReference>
<dbReference type="CDD" id="cd00405">
    <property type="entry name" value="PRAI"/>
    <property type="match status" value="1"/>
</dbReference>
<dbReference type="Gene3D" id="3.20.20.70">
    <property type="entry name" value="Aldolase class I"/>
    <property type="match status" value="1"/>
</dbReference>
<dbReference type="HAMAP" id="MF_00135">
    <property type="entry name" value="PRAI"/>
    <property type="match status" value="1"/>
</dbReference>
<dbReference type="InterPro" id="IPR013785">
    <property type="entry name" value="Aldolase_TIM"/>
</dbReference>
<dbReference type="InterPro" id="IPR001240">
    <property type="entry name" value="PRAI_dom"/>
</dbReference>
<dbReference type="InterPro" id="IPR011060">
    <property type="entry name" value="RibuloseP-bd_barrel"/>
</dbReference>
<dbReference type="InterPro" id="IPR044643">
    <property type="entry name" value="TrpF_fam"/>
</dbReference>
<dbReference type="NCBIfam" id="NF010563">
    <property type="entry name" value="PRK13958.1"/>
    <property type="match status" value="1"/>
</dbReference>
<dbReference type="PANTHER" id="PTHR42894">
    <property type="entry name" value="N-(5'-PHOSPHORIBOSYL)ANTHRANILATE ISOMERASE"/>
    <property type="match status" value="1"/>
</dbReference>
<dbReference type="PANTHER" id="PTHR42894:SF1">
    <property type="entry name" value="N-(5'-PHOSPHORIBOSYL)ANTHRANILATE ISOMERASE"/>
    <property type="match status" value="1"/>
</dbReference>
<dbReference type="Pfam" id="PF00697">
    <property type="entry name" value="PRAI"/>
    <property type="match status" value="1"/>
</dbReference>
<dbReference type="SUPFAM" id="SSF51366">
    <property type="entry name" value="Ribulose-phoshate binding barrel"/>
    <property type="match status" value="1"/>
</dbReference>
<accession>Q4L678</accession>